<organism>
    <name type="scientific">Borrelia hermsii (strain HS1 / DAH)</name>
    <dbReference type="NCBI Taxonomy" id="314723"/>
    <lineage>
        <taxon>Bacteria</taxon>
        <taxon>Pseudomonadati</taxon>
        <taxon>Spirochaetota</taxon>
        <taxon>Spirochaetia</taxon>
        <taxon>Spirochaetales</taxon>
        <taxon>Borreliaceae</taxon>
        <taxon>Borrelia</taxon>
    </lineage>
</organism>
<evidence type="ECO:0000255" key="1">
    <source>
        <dbReference type="HAMAP-Rule" id="MF_00500"/>
    </source>
</evidence>
<evidence type="ECO:0000305" key="2"/>
<protein>
    <recommendedName>
        <fullName evidence="1">Small ribosomal subunit protein bS20</fullName>
    </recommendedName>
    <alternativeName>
        <fullName evidence="2">30S ribosomal protein S20</fullName>
    </alternativeName>
</protein>
<feature type="chain" id="PRO_1000126405" description="Small ribosomal subunit protein bS20">
    <location>
        <begin position="1"/>
        <end position="85"/>
    </location>
</feature>
<proteinExistence type="inferred from homology"/>
<reference key="1">
    <citation type="submission" date="2004-12" db="EMBL/GenBank/DDBJ databases">
        <title>The genome sequence of Borrelia hermsii and Borrelia turicatae: comparative analysis of two agents of endemic N. America relapsing fever.</title>
        <authorList>
            <person name="Porcella S.F."/>
            <person name="Raffel S.J."/>
            <person name="Schrumpf M.E."/>
            <person name="Montgomery B."/>
            <person name="Smith T."/>
            <person name="Schwan T.G."/>
        </authorList>
    </citation>
    <scope>NUCLEOTIDE SEQUENCE [LARGE SCALE GENOMIC DNA]</scope>
    <source>
        <strain>HS1 / DAH</strain>
    </source>
</reference>
<accession>B2RZU2</accession>
<keyword id="KW-0687">Ribonucleoprotein</keyword>
<keyword id="KW-0689">Ribosomal protein</keyword>
<keyword id="KW-0694">RNA-binding</keyword>
<keyword id="KW-0699">rRNA-binding</keyword>
<comment type="function">
    <text evidence="1">Binds directly to 16S ribosomal RNA.</text>
</comment>
<comment type="similarity">
    <text evidence="1">Belongs to the bacterial ribosomal protein bS20 family.</text>
</comment>
<name>RS20_BORHD</name>
<dbReference type="EMBL" id="CP000048">
    <property type="protein sequence ID" value="AAX16748.1"/>
    <property type="molecule type" value="Genomic_DNA"/>
</dbReference>
<dbReference type="RefSeq" id="WP_012422005.1">
    <property type="nucleotide sequence ID" value="NZ_CP073136.1"/>
</dbReference>
<dbReference type="SMR" id="B2RZU2"/>
<dbReference type="GeneID" id="71843043"/>
<dbReference type="KEGG" id="bhr:BH0233"/>
<dbReference type="HOGENOM" id="CLU_160655_4_0_12"/>
<dbReference type="Proteomes" id="UP000008834">
    <property type="component" value="Chromosome"/>
</dbReference>
<dbReference type="GO" id="GO:0005829">
    <property type="term" value="C:cytosol"/>
    <property type="evidence" value="ECO:0007669"/>
    <property type="project" value="TreeGrafter"/>
</dbReference>
<dbReference type="GO" id="GO:0015935">
    <property type="term" value="C:small ribosomal subunit"/>
    <property type="evidence" value="ECO:0007669"/>
    <property type="project" value="TreeGrafter"/>
</dbReference>
<dbReference type="GO" id="GO:0070181">
    <property type="term" value="F:small ribosomal subunit rRNA binding"/>
    <property type="evidence" value="ECO:0007669"/>
    <property type="project" value="TreeGrafter"/>
</dbReference>
<dbReference type="GO" id="GO:0003735">
    <property type="term" value="F:structural constituent of ribosome"/>
    <property type="evidence" value="ECO:0007669"/>
    <property type="project" value="InterPro"/>
</dbReference>
<dbReference type="GO" id="GO:0006412">
    <property type="term" value="P:translation"/>
    <property type="evidence" value="ECO:0007669"/>
    <property type="project" value="UniProtKB-UniRule"/>
</dbReference>
<dbReference type="FunFam" id="1.20.58.110:FF:000001">
    <property type="entry name" value="30S ribosomal protein S20"/>
    <property type="match status" value="1"/>
</dbReference>
<dbReference type="Gene3D" id="1.20.58.110">
    <property type="entry name" value="Ribosomal protein S20"/>
    <property type="match status" value="1"/>
</dbReference>
<dbReference type="HAMAP" id="MF_00500">
    <property type="entry name" value="Ribosomal_bS20"/>
    <property type="match status" value="1"/>
</dbReference>
<dbReference type="InterPro" id="IPR002583">
    <property type="entry name" value="Ribosomal_bS20"/>
</dbReference>
<dbReference type="InterPro" id="IPR036510">
    <property type="entry name" value="Ribosomal_bS20_sf"/>
</dbReference>
<dbReference type="NCBIfam" id="TIGR00029">
    <property type="entry name" value="S20"/>
    <property type="match status" value="1"/>
</dbReference>
<dbReference type="PANTHER" id="PTHR33398">
    <property type="entry name" value="30S RIBOSOMAL PROTEIN S20"/>
    <property type="match status" value="1"/>
</dbReference>
<dbReference type="PANTHER" id="PTHR33398:SF1">
    <property type="entry name" value="SMALL RIBOSOMAL SUBUNIT PROTEIN BS20C"/>
    <property type="match status" value="1"/>
</dbReference>
<dbReference type="Pfam" id="PF01649">
    <property type="entry name" value="Ribosomal_S20p"/>
    <property type="match status" value="1"/>
</dbReference>
<dbReference type="SUPFAM" id="SSF46992">
    <property type="entry name" value="Ribosomal protein S20"/>
    <property type="match status" value="1"/>
</dbReference>
<sequence>MGNNPSALKRARQNLKRNLRNVSVKSELKTIEKRCMSLIREGKKEEALEFFKFVSKKLDTAARKRIIHRNKAARKKSNLSILLLR</sequence>
<gene>
    <name evidence="1" type="primary">rpsT</name>
    <name type="ordered locus">BH0233</name>
</gene>